<comment type="function">
    <text evidence="1">Immune receptor involved in self-nonself discrimination. In complex with KLRC1 or KLRC2 on cytotoxic and regulatory lymphocyte subsets, recognizes non-classical major histocompatibility (MHC) class Ib molecule MHC-E loaded with self-peptides derived from the signal sequence of classical MHC class Ia and non-classical MHC class Ib molecules. Enables cytotoxic cells to monitor the expression of MHC class I molecules in healthy cells and to tolerate self. Primarily functions as a ligand binding subunit as it lacks the capacity to signal.</text>
</comment>
<comment type="function">
    <text evidence="1">KLRD1-KLRC1 acts as an immune inhibitory receptor. Key inhibitory receptor on natural killer (NK) cells that regulates their activation and effector functions. Dominantly counteracts T cell receptor signaling on a subset of memory/effector CD8-positive T cells as part of an antigen-driven response to avoid autoimmunity. On intraepithelial CD8-positive gamma-delta regulatory T cells triggers TGFB1 secretion, which in turn limits the cytotoxic programming of intraepithelial CD8-positive alpha-beta T cells, distinguishing harmless from pathogenic antigens. In MHC-E-rich tumor microenvironment, acts as an immune inhibitory checkpoint and may contribute to progressive loss of effector functions of NK cells and tumor-specific T cells, a state known as cell exhaustion. Upon MHC-E-peptide binding, transmits intracellular signals through KLRC1 immunoreceptor tyrosine-based inhibition motifs (ITIMs) by recruiting INPP5D/SHIP-1 and INPPL1/SHIP-2 tyrosine phosphatases to ITIMs, and ultimately opposing signals transmitted by activating receptors through dephosphorylation of proximal signaling molecules.</text>
</comment>
<comment type="function">
    <text evidence="1">KLRD1-KLRC2 acts as an immune activating receptor. On cytotoxic lymphocyte subsets recognizes MHC-E loaded with signal sequence-derived peptides from non-classical MHC class Ib MHC-G molecules, likely playing a role in the generation and effector functions of adaptive NK cells and in maternal-fetal tolerance during pregnancy. Regulates the effector functions of terminally differentiated cytotoxic lymphocyte subsets, and in particular may play a role in adaptive NK cell response to viral infection. Upon MHC-E-peptide binding, transmits intracellular signals via the adapter protein TYROBP/DAP12, triggering the phosphorylation of proximal signaling molecules and cell activation.</text>
</comment>
<comment type="subunit">
    <text evidence="1">Can form disulfide-bonded heterodimer with NKG2 family members KLRC1 and KLRC2. KLRD1-KLRC1 heterodimer interacts with peptide-bound MHC-E-B2M heterotrimeric complex. KLRD1 plays a prominent role in directly interacting with MHC-E. KLRD1-KLRC1 interacts with much higher affinity with peptide-bound MHC-E-B2M than KLRD1-KLRC2. Interacts with the adapter protein TYROBP/DAP12; this interaction is required for cell surface expression and cell activation.</text>
</comment>
<comment type="subcellular location">
    <subcellularLocation>
        <location evidence="1">Cell membrane</location>
        <topology evidence="2">Single-pass type II membrane protein</topology>
    </subcellularLocation>
</comment>
<evidence type="ECO:0000250" key="1">
    <source>
        <dbReference type="UniProtKB" id="Q13241"/>
    </source>
</evidence>
<evidence type="ECO:0000255" key="2"/>
<evidence type="ECO:0000255" key="3">
    <source>
        <dbReference type="PROSITE-ProRule" id="PRU00040"/>
    </source>
</evidence>
<accession>O35778</accession>
<keyword id="KW-1064">Adaptive immunity</keyword>
<keyword id="KW-1003">Cell membrane</keyword>
<keyword id="KW-1015">Disulfide bond</keyword>
<keyword id="KW-0325">Glycoprotein</keyword>
<keyword id="KW-0391">Immunity</keyword>
<keyword id="KW-0399">Innate immunity</keyword>
<keyword id="KW-0430">Lectin</keyword>
<keyword id="KW-0472">Membrane</keyword>
<keyword id="KW-0675">Receptor</keyword>
<keyword id="KW-1185">Reference proteome</keyword>
<keyword id="KW-0735">Signal-anchor</keyword>
<keyword id="KW-0812">Transmembrane</keyword>
<keyword id="KW-1133">Transmembrane helix</keyword>
<sequence>MAVSRITRWRLMSMFFGIKCLFLIVALGVLVKNSFTIQNIQSTPSSTPIVEFQKVSKCCACLEKWIGHQCSCYFISKEEKSWKGSREFCASQNSSLLQLQTRNELSFMSSSQAFFWIGIHYNEERSAWLWEDGTFPSKDLFPEFSKFRQDHCIGYSISREISSESCENKNRFICKQLPT</sequence>
<proteinExistence type="evidence at transcript level"/>
<gene>
    <name type="primary">Klrd1</name>
    <name type="synonym">Cd94</name>
</gene>
<protein>
    <recommendedName>
        <fullName>Natural killer cells antigen CD94</fullName>
    </recommendedName>
    <alternativeName>
        <fullName>Killer cell lectin-like receptor subfamily D member 1</fullName>
    </alternativeName>
    <cdAntigenName>CD94</cdAntigenName>
</protein>
<dbReference type="EMBL" id="AF009133">
    <property type="protein sequence ID" value="AAC10220.1"/>
    <property type="molecule type" value="mRNA"/>
</dbReference>
<dbReference type="EMBL" id="BC086393">
    <property type="protein sequence ID" value="AAH86393.1"/>
    <property type="molecule type" value="mRNA"/>
</dbReference>
<dbReference type="RefSeq" id="NP_036877.1">
    <property type="nucleotide sequence ID" value="NM_012745.2"/>
</dbReference>
<dbReference type="SMR" id="O35778"/>
<dbReference type="FunCoup" id="O35778">
    <property type="interactions" value="149"/>
</dbReference>
<dbReference type="STRING" id="10116.ENSRNOP00000074715"/>
<dbReference type="GlyCosmos" id="O35778">
    <property type="glycosylation" value="1 site, No reported glycans"/>
</dbReference>
<dbReference type="GlyGen" id="O35778">
    <property type="glycosylation" value="1 site"/>
</dbReference>
<dbReference type="PhosphoSitePlus" id="O35778"/>
<dbReference type="PaxDb" id="10116-ENSRNOP00000052682"/>
<dbReference type="Ensembl" id="ENSRNOT00000082064.2">
    <property type="protein sequence ID" value="ENSRNOP00000074715.1"/>
    <property type="gene ID" value="ENSRNOG00000060246.2"/>
</dbReference>
<dbReference type="GeneID" id="25110"/>
<dbReference type="KEGG" id="rno:25110"/>
<dbReference type="UCSC" id="RGD:2978">
    <property type="organism name" value="rat"/>
</dbReference>
<dbReference type="AGR" id="RGD:2978"/>
<dbReference type="CTD" id="3824"/>
<dbReference type="RGD" id="2978">
    <property type="gene designation" value="Klrd1"/>
</dbReference>
<dbReference type="eggNOG" id="KOG4297">
    <property type="taxonomic scope" value="Eukaryota"/>
</dbReference>
<dbReference type="GeneTree" id="ENSGT00940000160107"/>
<dbReference type="HOGENOM" id="CLU_049894_9_3_1"/>
<dbReference type="InParanoid" id="O35778"/>
<dbReference type="OrthoDB" id="22723at9989"/>
<dbReference type="PhylomeDB" id="O35778"/>
<dbReference type="TreeFam" id="TF336674"/>
<dbReference type="Reactome" id="R-RNO-2172127">
    <property type="pathway name" value="DAP12 interactions"/>
</dbReference>
<dbReference type="Reactome" id="R-RNO-2424491">
    <property type="pathway name" value="DAP12 signaling"/>
</dbReference>
<dbReference type="PRO" id="PR:O35778"/>
<dbReference type="Proteomes" id="UP000002494">
    <property type="component" value="Chromosome 4"/>
</dbReference>
<dbReference type="Bgee" id="ENSRNOG00000060246">
    <property type="expression patterns" value="Expressed in spleen and 14 other cell types or tissues"/>
</dbReference>
<dbReference type="GO" id="GO:0009897">
    <property type="term" value="C:external side of plasma membrane"/>
    <property type="evidence" value="ECO:0000266"/>
    <property type="project" value="RGD"/>
</dbReference>
<dbReference type="GO" id="GO:0005886">
    <property type="term" value="C:plasma membrane"/>
    <property type="evidence" value="ECO:0000250"/>
    <property type="project" value="UniProtKB"/>
</dbReference>
<dbReference type="GO" id="GO:0043235">
    <property type="term" value="C:receptor complex"/>
    <property type="evidence" value="ECO:0000266"/>
    <property type="project" value="RGD"/>
</dbReference>
<dbReference type="GO" id="GO:0030246">
    <property type="term" value="F:carbohydrate binding"/>
    <property type="evidence" value="ECO:0007669"/>
    <property type="project" value="UniProtKB-KW"/>
</dbReference>
<dbReference type="GO" id="GO:0062082">
    <property type="term" value="F:HLA-E specific inhibitory MHC class Ib receptor activity"/>
    <property type="evidence" value="ECO:0000266"/>
    <property type="project" value="RGD"/>
</dbReference>
<dbReference type="GO" id="GO:0023024">
    <property type="term" value="F:MHC class I protein complex binding"/>
    <property type="evidence" value="ECO:0000266"/>
    <property type="project" value="RGD"/>
</dbReference>
<dbReference type="GO" id="GO:0023030">
    <property type="term" value="F:MHC class Ib protein binding, via antigen binding groove"/>
    <property type="evidence" value="ECO:0000266"/>
    <property type="project" value="RGD"/>
</dbReference>
<dbReference type="GO" id="GO:1990405">
    <property type="term" value="F:protein antigen binding"/>
    <property type="evidence" value="ECO:0000266"/>
    <property type="project" value="RGD"/>
</dbReference>
<dbReference type="GO" id="GO:0004888">
    <property type="term" value="F:transmembrane signaling receptor activity"/>
    <property type="evidence" value="ECO:0000318"/>
    <property type="project" value="GO_Central"/>
</dbReference>
<dbReference type="GO" id="GO:0002250">
    <property type="term" value="P:adaptive immune response"/>
    <property type="evidence" value="ECO:0007669"/>
    <property type="project" value="UniProtKB-KW"/>
</dbReference>
<dbReference type="GO" id="GO:0002228">
    <property type="term" value="P:natural killer cell mediated immunity"/>
    <property type="evidence" value="ECO:0000266"/>
    <property type="project" value="RGD"/>
</dbReference>
<dbReference type="GO" id="GO:0045953">
    <property type="term" value="P:negative regulation of natural killer cell mediated cytotoxicity"/>
    <property type="evidence" value="ECO:0000250"/>
    <property type="project" value="UniProtKB"/>
</dbReference>
<dbReference type="GO" id="GO:0001915">
    <property type="term" value="P:negative regulation of T cell mediated cytotoxicity"/>
    <property type="evidence" value="ECO:0000250"/>
    <property type="project" value="UniProtKB"/>
</dbReference>
<dbReference type="GO" id="GO:0045954">
    <property type="term" value="P:positive regulation of natural killer cell mediated cytotoxicity"/>
    <property type="evidence" value="ECO:0000266"/>
    <property type="project" value="RGD"/>
</dbReference>
<dbReference type="GO" id="GO:0002223">
    <property type="term" value="P:stimulatory C-type lectin receptor signaling pathway"/>
    <property type="evidence" value="ECO:0000250"/>
    <property type="project" value="UniProtKB"/>
</dbReference>
<dbReference type="CDD" id="cd03593">
    <property type="entry name" value="CLECT_NK_receptors_like"/>
    <property type="match status" value="1"/>
</dbReference>
<dbReference type="Gene3D" id="3.10.100.10">
    <property type="entry name" value="Mannose-Binding Protein A, subunit A"/>
    <property type="match status" value="1"/>
</dbReference>
<dbReference type="InterPro" id="IPR001304">
    <property type="entry name" value="C-type_lectin-like"/>
</dbReference>
<dbReference type="InterPro" id="IPR016186">
    <property type="entry name" value="C-type_lectin-like/link_sf"/>
</dbReference>
<dbReference type="InterPro" id="IPR016187">
    <property type="entry name" value="CTDL_fold"/>
</dbReference>
<dbReference type="InterPro" id="IPR050919">
    <property type="entry name" value="NKG2/CD94_NK_receptors"/>
</dbReference>
<dbReference type="InterPro" id="IPR033992">
    <property type="entry name" value="NKR-like_CTLD"/>
</dbReference>
<dbReference type="PANTHER" id="PTHR22800">
    <property type="entry name" value="C-TYPE LECTIN PROTEINS"/>
    <property type="match status" value="1"/>
</dbReference>
<dbReference type="PANTHER" id="PTHR22800:SF252">
    <property type="entry name" value="NATURAL KILLER CELLS ANTIGEN CD94"/>
    <property type="match status" value="1"/>
</dbReference>
<dbReference type="Pfam" id="PF00059">
    <property type="entry name" value="Lectin_C"/>
    <property type="match status" value="1"/>
</dbReference>
<dbReference type="SMART" id="SM00034">
    <property type="entry name" value="CLECT"/>
    <property type="match status" value="1"/>
</dbReference>
<dbReference type="SUPFAM" id="SSF56436">
    <property type="entry name" value="C-type lectin-like"/>
    <property type="match status" value="1"/>
</dbReference>
<dbReference type="PROSITE" id="PS50041">
    <property type="entry name" value="C_TYPE_LECTIN_2"/>
    <property type="match status" value="1"/>
</dbReference>
<reference key="1">
    <citation type="journal article" date="1997" name="Eur. J. Immunol.">
        <title>Molecular characterization of a gene in the rat homologous to human CD94.</title>
        <authorList>
            <person name="Dissen E."/>
            <person name="Berg S.F."/>
            <person name="Westgaard I.H."/>
            <person name="Fossum S."/>
        </authorList>
    </citation>
    <scope>NUCLEOTIDE SEQUENCE [MRNA]</scope>
    <source>
        <strain>Fischer 344</strain>
    </source>
</reference>
<reference key="2">
    <citation type="journal article" date="2004" name="Genome Res.">
        <title>The status, quality, and expansion of the NIH full-length cDNA project: the Mammalian Gene Collection (MGC).</title>
        <authorList>
            <consortium name="The MGC Project Team"/>
        </authorList>
    </citation>
    <scope>NUCLEOTIDE SEQUENCE [LARGE SCALE MRNA]</scope>
    <source>
        <tissue>Ovary</tissue>
    </source>
</reference>
<organism>
    <name type="scientific">Rattus norvegicus</name>
    <name type="common">Rat</name>
    <dbReference type="NCBI Taxonomy" id="10116"/>
    <lineage>
        <taxon>Eukaryota</taxon>
        <taxon>Metazoa</taxon>
        <taxon>Chordata</taxon>
        <taxon>Craniata</taxon>
        <taxon>Vertebrata</taxon>
        <taxon>Euteleostomi</taxon>
        <taxon>Mammalia</taxon>
        <taxon>Eutheria</taxon>
        <taxon>Euarchontoglires</taxon>
        <taxon>Glires</taxon>
        <taxon>Rodentia</taxon>
        <taxon>Myomorpha</taxon>
        <taxon>Muroidea</taxon>
        <taxon>Muridae</taxon>
        <taxon>Murinae</taxon>
        <taxon>Rattus</taxon>
    </lineage>
</organism>
<feature type="chain" id="PRO_0000378459" description="Natural killer cells antigen CD94">
    <location>
        <begin position="1"/>
        <end position="179"/>
    </location>
</feature>
<feature type="topological domain" description="Cytoplasmic" evidence="2">
    <location>
        <begin position="1"/>
        <end position="10"/>
    </location>
</feature>
<feature type="transmembrane region" description="Helical; Signal-anchor for type II membrane protein" evidence="2">
    <location>
        <begin position="11"/>
        <end position="31"/>
    </location>
</feature>
<feature type="topological domain" description="Extracellular" evidence="2">
    <location>
        <begin position="32"/>
        <end position="179"/>
    </location>
</feature>
<feature type="domain" description="C-type lectin" evidence="3">
    <location>
        <begin position="68"/>
        <end position="175"/>
    </location>
</feature>
<feature type="glycosylation site" description="N-linked (GlcNAc...) asparagine" evidence="2">
    <location>
        <position position="93"/>
    </location>
</feature>
<feature type="disulfide bond" evidence="3">
    <location>
        <begin position="58"/>
        <end position="70"/>
    </location>
</feature>
<feature type="disulfide bond" description="Interchain (with C-116 in KLRC1/NGK2A)" evidence="3">
    <location>
        <position position="59"/>
    </location>
</feature>
<feature type="disulfide bond" evidence="3">
    <location>
        <begin position="61"/>
        <end position="72"/>
    </location>
</feature>
<feature type="disulfide bond" evidence="3">
    <location>
        <begin position="89"/>
        <end position="174"/>
    </location>
</feature>
<feature type="disulfide bond" evidence="3">
    <location>
        <begin position="152"/>
        <end position="166"/>
    </location>
</feature>
<name>KLRD1_RAT</name>